<evidence type="ECO:0000255" key="1">
    <source>
        <dbReference type="HAMAP-Rule" id="MF_01328"/>
    </source>
</evidence>
<evidence type="ECO:0000256" key="2">
    <source>
        <dbReference type="SAM" id="MobiDB-lite"/>
    </source>
</evidence>
<evidence type="ECO:0000305" key="3"/>
<reference key="1">
    <citation type="journal article" date="2006" name="BMC Genomics">
        <title>Complete genome sequence of Shigella flexneri 5b and comparison with Shigella flexneri 2a.</title>
        <authorList>
            <person name="Nie H."/>
            <person name="Yang F."/>
            <person name="Zhang X."/>
            <person name="Yang J."/>
            <person name="Chen L."/>
            <person name="Wang J."/>
            <person name="Xiong Z."/>
            <person name="Peng J."/>
            <person name="Sun L."/>
            <person name="Dong J."/>
            <person name="Xue Y."/>
            <person name="Xu X."/>
            <person name="Chen S."/>
            <person name="Yao Z."/>
            <person name="Shen Y."/>
            <person name="Jin Q."/>
        </authorList>
    </citation>
    <scope>NUCLEOTIDE SEQUENCE [LARGE SCALE GENOMIC DNA]</scope>
    <source>
        <strain>8401</strain>
    </source>
</reference>
<name>RL4_SHIF8</name>
<organism>
    <name type="scientific">Shigella flexneri serotype 5b (strain 8401)</name>
    <dbReference type="NCBI Taxonomy" id="373384"/>
    <lineage>
        <taxon>Bacteria</taxon>
        <taxon>Pseudomonadati</taxon>
        <taxon>Pseudomonadota</taxon>
        <taxon>Gammaproteobacteria</taxon>
        <taxon>Enterobacterales</taxon>
        <taxon>Enterobacteriaceae</taxon>
        <taxon>Shigella</taxon>
    </lineage>
</organism>
<sequence>MELVLKDAQSALTVSETTFGRDFNEALVHQVVVAYAAGARQGTRAQKTRAEVTGSGKKPWRQKGTGRARSGSIKSPIWRSGGVTFAARPQDHSQKVNKKMYRGALKSILSELVRQDRLIVVEKFSVEAPKTKLLAQKLKDMALEDVLIITGELDENLFLAARNLQKVDVRDATGIDPVSLIAFDKVVMTADAVKQVEEMLA</sequence>
<feature type="chain" id="PRO_1000052501" description="Large ribosomal subunit protein uL4">
    <location>
        <begin position="1"/>
        <end position="201"/>
    </location>
</feature>
<feature type="region of interest" description="Disordered" evidence="2">
    <location>
        <begin position="44"/>
        <end position="71"/>
    </location>
</feature>
<keyword id="KW-0687">Ribonucleoprotein</keyword>
<keyword id="KW-0689">Ribosomal protein</keyword>
<keyword id="KW-0694">RNA-binding</keyword>
<keyword id="KW-0699">rRNA-binding</keyword>
<dbReference type="EMBL" id="CP000266">
    <property type="protein sequence ID" value="ABF05381.1"/>
    <property type="molecule type" value="Genomic_DNA"/>
</dbReference>
<dbReference type="RefSeq" id="WP_000424397.1">
    <property type="nucleotide sequence ID" value="NC_008258.1"/>
</dbReference>
<dbReference type="SMR" id="Q0SZY4"/>
<dbReference type="KEGG" id="sfv:SFV_3338"/>
<dbReference type="HOGENOM" id="CLU_041575_5_2_6"/>
<dbReference type="Proteomes" id="UP000000659">
    <property type="component" value="Chromosome"/>
</dbReference>
<dbReference type="GO" id="GO:1990904">
    <property type="term" value="C:ribonucleoprotein complex"/>
    <property type="evidence" value="ECO:0007669"/>
    <property type="project" value="UniProtKB-KW"/>
</dbReference>
<dbReference type="GO" id="GO:0005840">
    <property type="term" value="C:ribosome"/>
    <property type="evidence" value="ECO:0007669"/>
    <property type="project" value="UniProtKB-KW"/>
</dbReference>
<dbReference type="GO" id="GO:0019843">
    <property type="term" value="F:rRNA binding"/>
    <property type="evidence" value="ECO:0007669"/>
    <property type="project" value="UniProtKB-UniRule"/>
</dbReference>
<dbReference type="GO" id="GO:0003735">
    <property type="term" value="F:structural constituent of ribosome"/>
    <property type="evidence" value="ECO:0007669"/>
    <property type="project" value="InterPro"/>
</dbReference>
<dbReference type="GO" id="GO:0006412">
    <property type="term" value="P:translation"/>
    <property type="evidence" value="ECO:0007669"/>
    <property type="project" value="UniProtKB-UniRule"/>
</dbReference>
<dbReference type="FunFam" id="3.40.1370.10:FF:000001">
    <property type="entry name" value="50S ribosomal protein L4"/>
    <property type="match status" value="1"/>
</dbReference>
<dbReference type="Gene3D" id="3.40.1370.10">
    <property type="match status" value="1"/>
</dbReference>
<dbReference type="HAMAP" id="MF_01328_B">
    <property type="entry name" value="Ribosomal_uL4_B"/>
    <property type="match status" value="1"/>
</dbReference>
<dbReference type="InterPro" id="IPR002136">
    <property type="entry name" value="Ribosomal_uL4"/>
</dbReference>
<dbReference type="InterPro" id="IPR013005">
    <property type="entry name" value="Ribosomal_uL4-like"/>
</dbReference>
<dbReference type="InterPro" id="IPR023574">
    <property type="entry name" value="Ribosomal_uL4_dom_sf"/>
</dbReference>
<dbReference type="NCBIfam" id="TIGR03953">
    <property type="entry name" value="rplD_bact"/>
    <property type="match status" value="1"/>
</dbReference>
<dbReference type="PANTHER" id="PTHR10746">
    <property type="entry name" value="50S RIBOSOMAL PROTEIN L4"/>
    <property type="match status" value="1"/>
</dbReference>
<dbReference type="PANTHER" id="PTHR10746:SF6">
    <property type="entry name" value="LARGE RIBOSOMAL SUBUNIT PROTEIN UL4M"/>
    <property type="match status" value="1"/>
</dbReference>
<dbReference type="Pfam" id="PF00573">
    <property type="entry name" value="Ribosomal_L4"/>
    <property type="match status" value="1"/>
</dbReference>
<dbReference type="SUPFAM" id="SSF52166">
    <property type="entry name" value="Ribosomal protein L4"/>
    <property type="match status" value="1"/>
</dbReference>
<protein>
    <recommendedName>
        <fullName evidence="1">Large ribosomal subunit protein uL4</fullName>
    </recommendedName>
    <alternativeName>
        <fullName evidence="3">50S ribosomal protein L4</fullName>
    </alternativeName>
</protein>
<accession>Q0SZY4</accession>
<comment type="function">
    <text evidence="1">One of the primary rRNA binding proteins, this protein initially binds near the 5'-end of the 23S rRNA. It is important during the early stages of 50S assembly. It makes multiple contacts with different domains of the 23S rRNA in the assembled 50S subunit and ribosome.</text>
</comment>
<comment type="function">
    <text evidence="1">Forms part of the polypeptide exit tunnel.</text>
</comment>
<comment type="subunit">
    <text evidence="1">Part of the 50S ribosomal subunit.</text>
</comment>
<comment type="similarity">
    <text evidence="1">Belongs to the universal ribosomal protein uL4 family.</text>
</comment>
<gene>
    <name evidence="1" type="primary">rplD</name>
    <name type="ordered locus">SFV_3338</name>
</gene>
<proteinExistence type="inferred from homology"/>